<accession>B3QPN4</accession>
<organism>
    <name type="scientific">Chlorobaculum parvum (strain DSM 263 / NCIMB 8327)</name>
    <name type="common">Chlorobium vibrioforme subsp. thiosulfatophilum</name>
    <dbReference type="NCBI Taxonomy" id="517417"/>
    <lineage>
        <taxon>Bacteria</taxon>
        <taxon>Pseudomonadati</taxon>
        <taxon>Chlorobiota</taxon>
        <taxon>Chlorobiia</taxon>
        <taxon>Chlorobiales</taxon>
        <taxon>Chlorobiaceae</taxon>
        <taxon>Chlorobaculum</taxon>
    </lineage>
</organism>
<reference key="1">
    <citation type="submission" date="2008-06" db="EMBL/GenBank/DDBJ databases">
        <title>Complete sequence of Chlorobaculum parvum NCIB 8327.</title>
        <authorList>
            <consortium name="US DOE Joint Genome Institute"/>
            <person name="Lucas S."/>
            <person name="Copeland A."/>
            <person name="Lapidus A."/>
            <person name="Glavina del Rio T."/>
            <person name="Dalin E."/>
            <person name="Tice H."/>
            <person name="Bruce D."/>
            <person name="Goodwin L."/>
            <person name="Pitluck S."/>
            <person name="Schmutz J."/>
            <person name="Larimer F."/>
            <person name="Land M."/>
            <person name="Hauser L."/>
            <person name="Kyrpides N."/>
            <person name="Mikhailova N."/>
            <person name="Zhao F."/>
            <person name="Li T."/>
            <person name="Liu Z."/>
            <person name="Overmann J."/>
            <person name="Bryant D.A."/>
            <person name="Richardson P."/>
        </authorList>
    </citation>
    <scope>NUCLEOTIDE SEQUENCE [LARGE SCALE GENOMIC DNA]</scope>
    <source>
        <strain>DSM 263 / NCIMB 8327</strain>
    </source>
</reference>
<sequence length="439" mass="48552">MTKDKEPRKDHTSGRKNFGGEPPVVCSFCGRTSHEVNSMVAGPNAFICDRCILSSVEILRKEISAIRHPEKTSEPAFQPRLKSPVNIKESLDQYVIGQERAKKSLSVAVYNHYKRIDAHEWTAEDEVEIEKSNILLIGPTGTGKTLLAQTLANLLEVPFTIADATSLTEAGYVGDDVETILARLLHASDFNLERAERGIIYVDEIDKIARKSANVSITRDVSGEGVQQALLKILEGSVVGVPPKGGRKHPEQQLININTKNILFICGGAFEGLDKIIARRVSKSSMGFGSKVKDKQTGYDPEILKLVTQDDLHEYGLIPEFIGRLPVMSALDPLDASALRNILVEPKNALVKQYKRLFEMDGVELEFTDEALDKVVEIAIERGTGARALRSVLENVMIDIMFELPTLKDVQKCIITSETIDKISGPVYEKKDGKERLTA</sequence>
<comment type="function">
    <text evidence="1">ATP-dependent specificity component of the Clp protease. It directs the protease to specific substrates. Can perform chaperone functions in the absence of ClpP.</text>
</comment>
<comment type="subunit">
    <text evidence="1">Component of the ClpX-ClpP complex. Forms a hexameric ring that, in the presence of ATP, binds to fourteen ClpP subunits assembled into a disk-like structure with a central cavity, resembling the structure of eukaryotic proteasomes.</text>
</comment>
<comment type="similarity">
    <text evidence="1">Belongs to the ClpX chaperone family.</text>
</comment>
<proteinExistence type="inferred from homology"/>
<name>CLPX_CHLP8</name>
<feature type="chain" id="PRO_1000097934" description="ATP-dependent Clp protease ATP-binding subunit ClpX">
    <location>
        <begin position="1"/>
        <end position="439"/>
    </location>
</feature>
<feature type="domain" description="ClpX-type ZB" evidence="2">
    <location>
        <begin position="13"/>
        <end position="67"/>
    </location>
</feature>
<feature type="binding site" evidence="2">
    <location>
        <position position="26"/>
    </location>
    <ligand>
        <name>Zn(2+)</name>
        <dbReference type="ChEBI" id="CHEBI:29105"/>
    </ligand>
</feature>
<feature type="binding site" evidence="2">
    <location>
        <position position="29"/>
    </location>
    <ligand>
        <name>Zn(2+)</name>
        <dbReference type="ChEBI" id="CHEBI:29105"/>
    </ligand>
</feature>
<feature type="binding site" evidence="2">
    <location>
        <position position="48"/>
    </location>
    <ligand>
        <name>Zn(2+)</name>
        <dbReference type="ChEBI" id="CHEBI:29105"/>
    </ligand>
</feature>
<feature type="binding site" evidence="2">
    <location>
        <position position="51"/>
    </location>
    <ligand>
        <name>Zn(2+)</name>
        <dbReference type="ChEBI" id="CHEBI:29105"/>
    </ligand>
</feature>
<feature type="binding site" evidence="1">
    <location>
        <begin position="139"/>
        <end position="146"/>
    </location>
    <ligand>
        <name>ATP</name>
        <dbReference type="ChEBI" id="CHEBI:30616"/>
    </ligand>
</feature>
<gene>
    <name evidence="1" type="primary">clpX</name>
    <name type="ordered locus">Cpar_1489</name>
</gene>
<evidence type="ECO:0000255" key="1">
    <source>
        <dbReference type="HAMAP-Rule" id="MF_00175"/>
    </source>
</evidence>
<evidence type="ECO:0000255" key="2">
    <source>
        <dbReference type="PROSITE-ProRule" id="PRU01250"/>
    </source>
</evidence>
<protein>
    <recommendedName>
        <fullName evidence="1">ATP-dependent Clp protease ATP-binding subunit ClpX</fullName>
    </recommendedName>
</protein>
<keyword id="KW-0067">ATP-binding</keyword>
<keyword id="KW-0143">Chaperone</keyword>
<keyword id="KW-0479">Metal-binding</keyword>
<keyword id="KW-0547">Nucleotide-binding</keyword>
<keyword id="KW-0862">Zinc</keyword>
<dbReference type="EMBL" id="CP001099">
    <property type="protein sequence ID" value="ACF11887.1"/>
    <property type="molecule type" value="Genomic_DNA"/>
</dbReference>
<dbReference type="RefSeq" id="WP_012502720.1">
    <property type="nucleotide sequence ID" value="NC_011027.1"/>
</dbReference>
<dbReference type="SMR" id="B3QPN4"/>
<dbReference type="STRING" id="517417.Cpar_1489"/>
<dbReference type="KEGG" id="cpc:Cpar_1489"/>
<dbReference type="eggNOG" id="COG1219">
    <property type="taxonomic scope" value="Bacteria"/>
</dbReference>
<dbReference type="HOGENOM" id="CLU_014218_8_2_10"/>
<dbReference type="OrthoDB" id="9804062at2"/>
<dbReference type="Proteomes" id="UP000008811">
    <property type="component" value="Chromosome"/>
</dbReference>
<dbReference type="GO" id="GO:0009376">
    <property type="term" value="C:HslUV protease complex"/>
    <property type="evidence" value="ECO:0007669"/>
    <property type="project" value="TreeGrafter"/>
</dbReference>
<dbReference type="GO" id="GO:0005524">
    <property type="term" value="F:ATP binding"/>
    <property type="evidence" value="ECO:0007669"/>
    <property type="project" value="UniProtKB-UniRule"/>
</dbReference>
<dbReference type="GO" id="GO:0016887">
    <property type="term" value="F:ATP hydrolysis activity"/>
    <property type="evidence" value="ECO:0007669"/>
    <property type="project" value="InterPro"/>
</dbReference>
<dbReference type="GO" id="GO:0140662">
    <property type="term" value="F:ATP-dependent protein folding chaperone"/>
    <property type="evidence" value="ECO:0007669"/>
    <property type="project" value="InterPro"/>
</dbReference>
<dbReference type="GO" id="GO:0046983">
    <property type="term" value="F:protein dimerization activity"/>
    <property type="evidence" value="ECO:0007669"/>
    <property type="project" value="InterPro"/>
</dbReference>
<dbReference type="GO" id="GO:0051082">
    <property type="term" value="F:unfolded protein binding"/>
    <property type="evidence" value="ECO:0007669"/>
    <property type="project" value="UniProtKB-UniRule"/>
</dbReference>
<dbReference type="GO" id="GO:0008270">
    <property type="term" value="F:zinc ion binding"/>
    <property type="evidence" value="ECO:0007669"/>
    <property type="project" value="InterPro"/>
</dbReference>
<dbReference type="GO" id="GO:0051301">
    <property type="term" value="P:cell division"/>
    <property type="evidence" value="ECO:0007669"/>
    <property type="project" value="TreeGrafter"/>
</dbReference>
<dbReference type="GO" id="GO:0051603">
    <property type="term" value="P:proteolysis involved in protein catabolic process"/>
    <property type="evidence" value="ECO:0007669"/>
    <property type="project" value="TreeGrafter"/>
</dbReference>
<dbReference type="CDD" id="cd19497">
    <property type="entry name" value="RecA-like_ClpX"/>
    <property type="match status" value="1"/>
</dbReference>
<dbReference type="FunFam" id="1.10.8.60:FF:000002">
    <property type="entry name" value="ATP-dependent Clp protease ATP-binding subunit ClpX"/>
    <property type="match status" value="1"/>
</dbReference>
<dbReference type="FunFam" id="3.40.50.300:FF:000005">
    <property type="entry name" value="ATP-dependent Clp protease ATP-binding subunit ClpX"/>
    <property type="match status" value="1"/>
</dbReference>
<dbReference type="Gene3D" id="1.10.8.60">
    <property type="match status" value="1"/>
</dbReference>
<dbReference type="Gene3D" id="6.20.220.10">
    <property type="entry name" value="ClpX chaperone, C4-type zinc finger domain"/>
    <property type="match status" value="1"/>
</dbReference>
<dbReference type="Gene3D" id="3.40.50.300">
    <property type="entry name" value="P-loop containing nucleotide triphosphate hydrolases"/>
    <property type="match status" value="1"/>
</dbReference>
<dbReference type="HAMAP" id="MF_00175">
    <property type="entry name" value="ClpX"/>
    <property type="match status" value="1"/>
</dbReference>
<dbReference type="InterPro" id="IPR003593">
    <property type="entry name" value="AAA+_ATPase"/>
</dbReference>
<dbReference type="InterPro" id="IPR050052">
    <property type="entry name" value="ATP-dep_Clp_protease_ClpX"/>
</dbReference>
<dbReference type="InterPro" id="IPR003959">
    <property type="entry name" value="ATPase_AAA_core"/>
</dbReference>
<dbReference type="InterPro" id="IPR019489">
    <property type="entry name" value="Clp_ATPase_C"/>
</dbReference>
<dbReference type="InterPro" id="IPR004487">
    <property type="entry name" value="Clp_protease_ATP-bd_su_ClpX"/>
</dbReference>
<dbReference type="InterPro" id="IPR046425">
    <property type="entry name" value="ClpX_bact"/>
</dbReference>
<dbReference type="InterPro" id="IPR027417">
    <property type="entry name" value="P-loop_NTPase"/>
</dbReference>
<dbReference type="InterPro" id="IPR010603">
    <property type="entry name" value="Znf_CppX_C4"/>
</dbReference>
<dbReference type="InterPro" id="IPR038366">
    <property type="entry name" value="Znf_CppX_C4_sf"/>
</dbReference>
<dbReference type="NCBIfam" id="TIGR00382">
    <property type="entry name" value="clpX"/>
    <property type="match status" value="1"/>
</dbReference>
<dbReference type="NCBIfam" id="NF003745">
    <property type="entry name" value="PRK05342.1"/>
    <property type="match status" value="1"/>
</dbReference>
<dbReference type="PANTHER" id="PTHR48102:SF7">
    <property type="entry name" value="ATP-DEPENDENT CLP PROTEASE ATP-BINDING SUBUNIT CLPX-LIKE, MITOCHONDRIAL"/>
    <property type="match status" value="1"/>
</dbReference>
<dbReference type="PANTHER" id="PTHR48102">
    <property type="entry name" value="ATP-DEPENDENT CLP PROTEASE ATP-BINDING SUBUNIT CLPX-LIKE, MITOCHONDRIAL-RELATED"/>
    <property type="match status" value="1"/>
</dbReference>
<dbReference type="Pfam" id="PF07724">
    <property type="entry name" value="AAA_2"/>
    <property type="match status" value="1"/>
</dbReference>
<dbReference type="Pfam" id="PF10431">
    <property type="entry name" value="ClpB_D2-small"/>
    <property type="match status" value="1"/>
</dbReference>
<dbReference type="Pfam" id="PF06689">
    <property type="entry name" value="zf-C4_ClpX"/>
    <property type="match status" value="1"/>
</dbReference>
<dbReference type="SMART" id="SM00382">
    <property type="entry name" value="AAA"/>
    <property type="match status" value="1"/>
</dbReference>
<dbReference type="SMART" id="SM01086">
    <property type="entry name" value="ClpB_D2-small"/>
    <property type="match status" value="1"/>
</dbReference>
<dbReference type="SMART" id="SM00994">
    <property type="entry name" value="zf-C4_ClpX"/>
    <property type="match status" value="1"/>
</dbReference>
<dbReference type="SUPFAM" id="SSF57716">
    <property type="entry name" value="Glucocorticoid receptor-like (DNA-binding domain)"/>
    <property type="match status" value="1"/>
</dbReference>
<dbReference type="SUPFAM" id="SSF52540">
    <property type="entry name" value="P-loop containing nucleoside triphosphate hydrolases"/>
    <property type="match status" value="1"/>
</dbReference>
<dbReference type="PROSITE" id="PS51902">
    <property type="entry name" value="CLPX_ZB"/>
    <property type="match status" value="1"/>
</dbReference>